<feature type="chain" id="PRO_1000054348" description="CCA-adding enzyme">
    <location>
        <begin position="1"/>
        <end position="454"/>
    </location>
</feature>
<feature type="binding site" evidence="1">
    <location>
        <position position="59"/>
    </location>
    <ligand>
        <name>ATP</name>
        <dbReference type="ChEBI" id="CHEBI:30616"/>
    </ligand>
</feature>
<feature type="binding site" evidence="1">
    <location>
        <position position="59"/>
    </location>
    <ligand>
        <name>CTP</name>
        <dbReference type="ChEBI" id="CHEBI:37563"/>
    </ligand>
</feature>
<feature type="binding site" evidence="1">
    <location>
        <position position="62"/>
    </location>
    <ligand>
        <name>ATP</name>
        <dbReference type="ChEBI" id="CHEBI:30616"/>
    </ligand>
</feature>
<feature type="binding site" evidence="1">
    <location>
        <position position="62"/>
    </location>
    <ligand>
        <name>CTP</name>
        <dbReference type="ChEBI" id="CHEBI:37563"/>
    </ligand>
</feature>
<feature type="binding site" evidence="1">
    <location>
        <position position="71"/>
    </location>
    <ligand>
        <name>Mg(2+)</name>
        <dbReference type="ChEBI" id="CHEBI:18420"/>
    </ligand>
</feature>
<feature type="binding site" evidence="1">
    <location>
        <position position="73"/>
    </location>
    <ligand>
        <name>Mg(2+)</name>
        <dbReference type="ChEBI" id="CHEBI:18420"/>
    </ligand>
</feature>
<feature type="binding site" evidence="1">
    <location>
        <position position="125"/>
    </location>
    <ligand>
        <name>Mg(2+)</name>
        <dbReference type="ChEBI" id="CHEBI:18420"/>
    </ligand>
</feature>
<feature type="binding site" evidence="1">
    <location>
        <position position="148"/>
    </location>
    <ligand>
        <name>ATP</name>
        <dbReference type="ChEBI" id="CHEBI:30616"/>
    </ligand>
</feature>
<feature type="binding site" evidence="1">
    <location>
        <position position="148"/>
    </location>
    <ligand>
        <name>CTP</name>
        <dbReference type="ChEBI" id="CHEBI:37563"/>
    </ligand>
</feature>
<feature type="binding site" evidence="1">
    <location>
        <position position="167"/>
    </location>
    <ligand>
        <name>ATP</name>
        <dbReference type="ChEBI" id="CHEBI:30616"/>
    </ligand>
</feature>
<feature type="binding site" evidence="1">
    <location>
        <position position="167"/>
    </location>
    <ligand>
        <name>CTP</name>
        <dbReference type="ChEBI" id="CHEBI:37563"/>
    </ligand>
</feature>
<feature type="binding site" evidence="1">
    <location>
        <position position="176"/>
    </location>
    <ligand>
        <name>ATP</name>
        <dbReference type="ChEBI" id="CHEBI:30616"/>
    </ligand>
</feature>
<feature type="binding site" evidence="1">
    <location>
        <position position="176"/>
    </location>
    <ligand>
        <name>CTP</name>
        <dbReference type="ChEBI" id="CHEBI:37563"/>
    </ligand>
</feature>
<proteinExistence type="inferred from homology"/>
<comment type="function">
    <text evidence="1">Catalyzes the addition and repair of the essential 3'-terminal CCA sequence in tRNAs without using a nucleic acid template. Adds these three nucleotides in the order of C, C, and A to the tRNA nucleotide-73, using CTP and ATP as substrates and producing inorganic pyrophosphate. tRNA 3'-terminal CCA addition is required both for tRNA processing and repair. Also involved in tRNA surveillance by mediating tandem CCA addition to generate a CCACCA at the 3' terminus of unstable tRNAs. While stable tRNAs receive only 3'-terminal CCA, unstable tRNAs are marked with CCACCA and rapidly degraded.</text>
</comment>
<comment type="catalytic activity">
    <reaction evidence="1">
        <text>a tRNA precursor + 2 CTP + ATP = a tRNA with a 3' CCA end + 3 diphosphate</text>
        <dbReference type="Rhea" id="RHEA:14433"/>
        <dbReference type="Rhea" id="RHEA-COMP:10465"/>
        <dbReference type="Rhea" id="RHEA-COMP:10468"/>
        <dbReference type="ChEBI" id="CHEBI:30616"/>
        <dbReference type="ChEBI" id="CHEBI:33019"/>
        <dbReference type="ChEBI" id="CHEBI:37563"/>
        <dbReference type="ChEBI" id="CHEBI:74896"/>
        <dbReference type="ChEBI" id="CHEBI:83071"/>
        <dbReference type="EC" id="2.7.7.72"/>
    </reaction>
</comment>
<comment type="catalytic activity">
    <reaction evidence="1">
        <text>a tRNA with a 3' CCA end + 2 CTP + ATP = a tRNA with a 3' CCACCA end + 3 diphosphate</text>
        <dbReference type="Rhea" id="RHEA:76235"/>
        <dbReference type="Rhea" id="RHEA-COMP:10468"/>
        <dbReference type="Rhea" id="RHEA-COMP:18655"/>
        <dbReference type="ChEBI" id="CHEBI:30616"/>
        <dbReference type="ChEBI" id="CHEBI:33019"/>
        <dbReference type="ChEBI" id="CHEBI:37563"/>
        <dbReference type="ChEBI" id="CHEBI:83071"/>
        <dbReference type="ChEBI" id="CHEBI:195187"/>
    </reaction>
    <physiologicalReaction direction="left-to-right" evidence="1">
        <dbReference type="Rhea" id="RHEA:76236"/>
    </physiologicalReaction>
</comment>
<comment type="cofactor">
    <cofactor evidence="1">
        <name>Mg(2+)</name>
        <dbReference type="ChEBI" id="CHEBI:18420"/>
    </cofactor>
</comment>
<comment type="subunit">
    <text evidence="1">Homodimer.</text>
</comment>
<comment type="miscellaneous">
    <text evidence="1">A single active site specifically recognizes both ATP and CTP and is responsible for their addition.</text>
</comment>
<comment type="similarity">
    <text evidence="1">Belongs to the tRNA nucleotidyltransferase/poly(A) polymerase family. Archaeal CCA-adding enzyme subfamily.</text>
</comment>
<name>CCA_METBF</name>
<accession>Q46AZ4</accession>
<sequence length="454" mass="51519">METYTGIPEELKFAVLERIQPTEPEREKLFAIQEELASQVKIAAEKLGIPGVLVKMVGSAARGTWLSGTHDIDVFISFPEETSRKDLETLGMAIAREVARYAEHAEDRHAEHPYLNITYKGFDVDLVPCFRVASASQIKSAVDRTPFHNDFVKPRIKGHEDEVLLLKQFMRGGGVYGSELKTQGFSGYLTELLVIRYGSFKNTIYAACSWKPGEKIDIMQHGEIEHEEPLVVIDPTDPRRNVAAALSLDKFCTFIDHCREFLKNPELSFFFPAPILPLEDSEILEKLESRKSTQLAVVFKTPDVVEDVLFPQLYKMEQAVAALLKEYDFTVIKTGVWSGNTETAVMMELISGTLPNVKKHIGPPVWVKVHAEKFKEKYQAADGVFGGYIENGKYIFEILRKYPTARGLLEDRLMSCSLGKQVHQSVNEGFEIIENAGICRLKEYDFRIYLRKWI</sequence>
<dbReference type="EC" id="2.7.7.72" evidence="1"/>
<dbReference type="EMBL" id="CP000099">
    <property type="protein sequence ID" value="AAZ70948.1"/>
    <property type="molecule type" value="Genomic_DNA"/>
</dbReference>
<dbReference type="SMR" id="Q46AZ4"/>
<dbReference type="STRING" id="269797.Mbar_A2014"/>
<dbReference type="PaxDb" id="269797-Mbar_A2014"/>
<dbReference type="KEGG" id="mba:Mbar_A2014"/>
<dbReference type="eggNOG" id="arCOG04249">
    <property type="taxonomic scope" value="Archaea"/>
</dbReference>
<dbReference type="HOGENOM" id="CLU_044679_1_0_2"/>
<dbReference type="OrthoDB" id="7378at2157"/>
<dbReference type="GO" id="GO:0005524">
    <property type="term" value="F:ATP binding"/>
    <property type="evidence" value="ECO:0007669"/>
    <property type="project" value="UniProtKB-UniRule"/>
</dbReference>
<dbReference type="GO" id="GO:0004810">
    <property type="term" value="F:CCA tRNA nucleotidyltransferase activity"/>
    <property type="evidence" value="ECO:0007669"/>
    <property type="project" value="UniProtKB-UniRule"/>
</dbReference>
<dbReference type="GO" id="GO:0000287">
    <property type="term" value="F:magnesium ion binding"/>
    <property type="evidence" value="ECO:0007669"/>
    <property type="project" value="UniProtKB-UniRule"/>
</dbReference>
<dbReference type="GO" id="GO:0000049">
    <property type="term" value="F:tRNA binding"/>
    <property type="evidence" value="ECO:0007669"/>
    <property type="project" value="UniProtKB-UniRule"/>
</dbReference>
<dbReference type="GO" id="GO:0042245">
    <property type="term" value="P:RNA repair"/>
    <property type="evidence" value="ECO:0007669"/>
    <property type="project" value="UniProtKB-KW"/>
</dbReference>
<dbReference type="GO" id="GO:0001680">
    <property type="term" value="P:tRNA 3'-terminal CCA addition"/>
    <property type="evidence" value="ECO:0007669"/>
    <property type="project" value="UniProtKB-UniRule"/>
</dbReference>
<dbReference type="CDD" id="cd05400">
    <property type="entry name" value="NT_2-5OAS_ClassI-CCAase"/>
    <property type="match status" value="1"/>
</dbReference>
<dbReference type="Gene3D" id="3.30.70.1550">
    <property type="entry name" value="Archaeal tRNA CCA-adding enzyme catalytic domain"/>
    <property type="match status" value="1"/>
</dbReference>
<dbReference type="Gene3D" id="3.30.460.10">
    <property type="entry name" value="Beta Polymerase, domain 2"/>
    <property type="match status" value="1"/>
</dbReference>
<dbReference type="Gene3D" id="1.10.1410.30">
    <property type="entry name" value="CCA tRNA nucleotidyltransferase, domain 2"/>
    <property type="match status" value="1"/>
</dbReference>
<dbReference type="Gene3D" id="3.30.70.590">
    <property type="entry name" value="Poly(A) polymerase predicted RNA binding domain"/>
    <property type="match status" value="1"/>
</dbReference>
<dbReference type="HAMAP" id="MF_01264">
    <property type="entry name" value="CCA_arch"/>
    <property type="match status" value="1"/>
</dbReference>
<dbReference type="InterPro" id="IPR048833">
    <property type="entry name" value="CAA_C"/>
</dbReference>
<dbReference type="InterPro" id="IPR008229">
    <property type="entry name" value="CCA-adding_arc"/>
</dbReference>
<dbReference type="InterPro" id="IPR042090">
    <property type="entry name" value="CCA_tRNA_nucleotrans_2"/>
</dbReference>
<dbReference type="InterPro" id="IPR006116">
    <property type="entry name" value="NT_2-5OAS_ClassI-CCAase"/>
</dbReference>
<dbReference type="InterPro" id="IPR043519">
    <property type="entry name" value="NT_sf"/>
</dbReference>
<dbReference type="InterPro" id="IPR011068">
    <property type="entry name" value="NuclTrfase_I-like_C"/>
</dbReference>
<dbReference type="InterPro" id="IPR002934">
    <property type="entry name" value="Polymerase_NTP_transf_dom"/>
</dbReference>
<dbReference type="InterPro" id="IPR015329">
    <property type="entry name" value="tRNA_NucTransf2"/>
</dbReference>
<dbReference type="NCBIfam" id="TIGR03671">
    <property type="entry name" value="cca_archaeal"/>
    <property type="match status" value="1"/>
</dbReference>
<dbReference type="PANTHER" id="PTHR39643">
    <property type="entry name" value="CCA-ADDING ENZYME"/>
    <property type="match status" value="1"/>
</dbReference>
<dbReference type="PANTHER" id="PTHR39643:SF1">
    <property type="entry name" value="CCA-ADDING ENZYME"/>
    <property type="match status" value="1"/>
</dbReference>
<dbReference type="Pfam" id="PF21133">
    <property type="entry name" value="CAA_C"/>
    <property type="match status" value="1"/>
</dbReference>
<dbReference type="Pfam" id="PF01909">
    <property type="entry name" value="NTP_transf_2"/>
    <property type="match status" value="1"/>
</dbReference>
<dbReference type="Pfam" id="PF09249">
    <property type="entry name" value="tRNA_NucTransf2"/>
    <property type="match status" value="1"/>
</dbReference>
<dbReference type="PIRSF" id="PIRSF005335">
    <property type="entry name" value="CCA_arch"/>
    <property type="match status" value="1"/>
</dbReference>
<dbReference type="SUPFAM" id="SSF81301">
    <property type="entry name" value="Nucleotidyltransferase"/>
    <property type="match status" value="1"/>
</dbReference>
<dbReference type="SUPFAM" id="SSF55003">
    <property type="entry name" value="PAP/Archaeal CCA-adding enzyme, C-terminal domain"/>
    <property type="match status" value="1"/>
</dbReference>
<dbReference type="SUPFAM" id="SSF81631">
    <property type="entry name" value="PAP/OAS1 substrate-binding domain"/>
    <property type="match status" value="1"/>
</dbReference>
<reference key="1">
    <citation type="journal article" date="2006" name="J. Bacteriol.">
        <title>The Methanosarcina barkeri genome: comparative analysis with Methanosarcina acetivorans and Methanosarcina mazei reveals extensive rearrangement within methanosarcinal genomes.</title>
        <authorList>
            <person name="Maeder D.L."/>
            <person name="Anderson I."/>
            <person name="Brettin T.S."/>
            <person name="Bruce D.C."/>
            <person name="Gilna P."/>
            <person name="Han C.S."/>
            <person name="Lapidus A."/>
            <person name="Metcalf W.W."/>
            <person name="Saunders E."/>
            <person name="Tapia R."/>
            <person name="Sowers K.R."/>
        </authorList>
    </citation>
    <scope>NUCLEOTIDE SEQUENCE [LARGE SCALE GENOMIC DNA]</scope>
    <source>
        <strain>Fusaro / DSM 804</strain>
    </source>
</reference>
<keyword id="KW-0067">ATP-binding</keyword>
<keyword id="KW-0460">Magnesium</keyword>
<keyword id="KW-0479">Metal-binding</keyword>
<keyword id="KW-0547">Nucleotide-binding</keyword>
<keyword id="KW-0548">Nucleotidyltransferase</keyword>
<keyword id="KW-0692">RNA repair</keyword>
<keyword id="KW-0694">RNA-binding</keyword>
<keyword id="KW-0808">Transferase</keyword>
<keyword id="KW-0819">tRNA processing</keyword>
<organism>
    <name type="scientific">Methanosarcina barkeri (strain Fusaro / DSM 804)</name>
    <dbReference type="NCBI Taxonomy" id="269797"/>
    <lineage>
        <taxon>Archaea</taxon>
        <taxon>Methanobacteriati</taxon>
        <taxon>Methanobacteriota</taxon>
        <taxon>Stenosarchaea group</taxon>
        <taxon>Methanomicrobia</taxon>
        <taxon>Methanosarcinales</taxon>
        <taxon>Methanosarcinaceae</taxon>
        <taxon>Methanosarcina</taxon>
    </lineage>
</organism>
<protein>
    <recommendedName>
        <fullName evidence="1">CCA-adding enzyme</fullName>
        <ecNumber evidence="1">2.7.7.72</ecNumber>
    </recommendedName>
    <alternativeName>
        <fullName evidence="1">CCA tRNA nucleotidyltransferase</fullName>
    </alternativeName>
    <alternativeName>
        <fullName evidence="1">tRNA CCA-pyrophosphorylase</fullName>
    </alternativeName>
    <alternativeName>
        <fullName evidence="1">tRNA adenylyl-/cytidylyl- transferase</fullName>
    </alternativeName>
    <alternativeName>
        <fullName evidence="1">tRNA nucleotidyltransferase</fullName>
    </alternativeName>
    <alternativeName>
        <fullName evidence="1">tRNA-NT</fullName>
    </alternativeName>
</protein>
<evidence type="ECO:0000255" key="1">
    <source>
        <dbReference type="HAMAP-Rule" id="MF_01264"/>
    </source>
</evidence>
<gene>
    <name evidence="1" type="primary">cca</name>
    <name type="ordered locus">Mbar_A2014</name>
</gene>